<sequence>MANDYLFTSESVSEGHPDKVADQISDAILDAILEQDKYSRVAAETLCNTGLVVLAGEITTTANIDYIQIARDTIKRIGYDNTDYGIDYKGCAVLVAYDKQSPDIAQGVDRAHDDNLDQGAGDQGLMFGYACDETPELMPLPIYLSHRLVERQASLRRDGRLQWLRPDAKSQVTVRYVDGKPDSIDTVVLSTQHAPDIELPALREAVIEEIIKPTLPAELIKGDIKFLVNPTGRFVIGGPQGDCGLTGRKIIVDTYGGAAPHGGGAFSGKDPSKVDRSAAYAGRYVAKNIVAAGLASRALIQVSYAIGVAEPTSVMVNTFGTGRVSDAVITKLVREHFDLRPKGIIKMLDLLRPIYEKTAAYGHFGREEPEFSWEATDKALALAEAAGVEPTARVA</sequence>
<protein>
    <recommendedName>
        <fullName evidence="1">S-adenosylmethionine synthase</fullName>
        <shortName evidence="1">AdoMet synthase</shortName>
        <ecNumber evidence="1">2.5.1.6</ecNumber>
    </recommendedName>
    <alternativeName>
        <fullName evidence="1">MAT</fullName>
    </alternativeName>
    <alternativeName>
        <fullName evidence="1">Methionine adenosyltransferase</fullName>
    </alternativeName>
</protein>
<proteinExistence type="inferred from homology"/>
<dbReference type="EC" id="2.5.1.6" evidence="1"/>
<dbReference type="EMBL" id="CP000378">
    <property type="protein sequence ID" value="ABF77366.1"/>
    <property type="molecule type" value="Genomic_DNA"/>
</dbReference>
<dbReference type="SMR" id="Q1BSN9"/>
<dbReference type="HOGENOM" id="CLU_041802_1_1_4"/>
<dbReference type="UniPathway" id="UPA00315">
    <property type="reaction ID" value="UER00080"/>
</dbReference>
<dbReference type="GO" id="GO:0005737">
    <property type="term" value="C:cytoplasm"/>
    <property type="evidence" value="ECO:0007669"/>
    <property type="project" value="UniProtKB-SubCell"/>
</dbReference>
<dbReference type="GO" id="GO:0005524">
    <property type="term" value="F:ATP binding"/>
    <property type="evidence" value="ECO:0007669"/>
    <property type="project" value="UniProtKB-UniRule"/>
</dbReference>
<dbReference type="GO" id="GO:0000287">
    <property type="term" value="F:magnesium ion binding"/>
    <property type="evidence" value="ECO:0007669"/>
    <property type="project" value="UniProtKB-UniRule"/>
</dbReference>
<dbReference type="GO" id="GO:0004478">
    <property type="term" value="F:methionine adenosyltransferase activity"/>
    <property type="evidence" value="ECO:0007669"/>
    <property type="project" value="UniProtKB-UniRule"/>
</dbReference>
<dbReference type="GO" id="GO:0006730">
    <property type="term" value="P:one-carbon metabolic process"/>
    <property type="evidence" value="ECO:0007669"/>
    <property type="project" value="UniProtKB-KW"/>
</dbReference>
<dbReference type="GO" id="GO:0006556">
    <property type="term" value="P:S-adenosylmethionine biosynthetic process"/>
    <property type="evidence" value="ECO:0007669"/>
    <property type="project" value="UniProtKB-UniRule"/>
</dbReference>
<dbReference type="CDD" id="cd18079">
    <property type="entry name" value="S-AdoMet_synt"/>
    <property type="match status" value="1"/>
</dbReference>
<dbReference type="FunFam" id="3.30.300.10:FF:000003">
    <property type="entry name" value="S-adenosylmethionine synthase"/>
    <property type="match status" value="1"/>
</dbReference>
<dbReference type="FunFam" id="3.30.300.10:FF:000004">
    <property type="entry name" value="S-adenosylmethionine synthase"/>
    <property type="match status" value="1"/>
</dbReference>
<dbReference type="Gene3D" id="3.30.300.10">
    <property type="match status" value="3"/>
</dbReference>
<dbReference type="HAMAP" id="MF_00086">
    <property type="entry name" value="S_AdoMet_synth1"/>
    <property type="match status" value="1"/>
</dbReference>
<dbReference type="InterPro" id="IPR022631">
    <property type="entry name" value="ADOMET_SYNTHASE_CS"/>
</dbReference>
<dbReference type="InterPro" id="IPR022630">
    <property type="entry name" value="S-AdoMet_synt_C"/>
</dbReference>
<dbReference type="InterPro" id="IPR022629">
    <property type="entry name" value="S-AdoMet_synt_central"/>
</dbReference>
<dbReference type="InterPro" id="IPR022628">
    <property type="entry name" value="S-AdoMet_synt_N"/>
</dbReference>
<dbReference type="InterPro" id="IPR002133">
    <property type="entry name" value="S-AdoMet_synthetase"/>
</dbReference>
<dbReference type="InterPro" id="IPR022636">
    <property type="entry name" value="S-AdoMet_synthetase_sfam"/>
</dbReference>
<dbReference type="NCBIfam" id="TIGR01034">
    <property type="entry name" value="metK"/>
    <property type="match status" value="1"/>
</dbReference>
<dbReference type="PANTHER" id="PTHR11964">
    <property type="entry name" value="S-ADENOSYLMETHIONINE SYNTHETASE"/>
    <property type="match status" value="1"/>
</dbReference>
<dbReference type="Pfam" id="PF02773">
    <property type="entry name" value="S-AdoMet_synt_C"/>
    <property type="match status" value="1"/>
</dbReference>
<dbReference type="Pfam" id="PF02772">
    <property type="entry name" value="S-AdoMet_synt_M"/>
    <property type="match status" value="1"/>
</dbReference>
<dbReference type="Pfam" id="PF00438">
    <property type="entry name" value="S-AdoMet_synt_N"/>
    <property type="match status" value="1"/>
</dbReference>
<dbReference type="PIRSF" id="PIRSF000497">
    <property type="entry name" value="MAT"/>
    <property type="match status" value="1"/>
</dbReference>
<dbReference type="SUPFAM" id="SSF55973">
    <property type="entry name" value="S-adenosylmethionine synthetase"/>
    <property type="match status" value="3"/>
</dbReference>
<dbReference type="PROSITE" id="PS00376">
    <property type="entry name" value="ADOMET_SYNTHASE_1"/>
    <property type="match status" value="1"/>
</dbReference>
<dbReference type="PROSITE" id="PS00377">
    <property type="entry name" value="ADOMET_SYNTHASE_2"/>
    <property type="match status" value="1"/>
</dbReference>
<name>METK_BURO1</name>
<reference key="1">
    <citation type="submission" date="2006-05" db="EMBL/GenBank/DDBJ databases">
        <title>Complete sequence of chromosome 1 of Burkholderia cenocepacia AU 1054.</title>
        <authorList>
            <consortium name="US DOE Joint Genome Institute"/>
            <person name="Copeland A."/>
            <person name="Lucas S."/>
            <person name="Lapidus A."/>
            <person name="Barry K."/>
            <person name="Detter J.C."/>
            <person name="Glavina del Rio T."/>
            <person name="Hammon N."/>
            <person name="Israni S."/>
            <person name="Dalin E."/>
            <person name="Tice H."/>
            <person name="Pitluck S."/>
            <person name="Chain P."/>
            <person name="Malfatti S."/>
            <person name="Shin M."/>
            <person name="Vergez L."/>
            <person name="Schmutz J."/>
            <person name="Larimer F."/>
            <person name="Land M."/>
            <person name="Hauser L."/>
            <person name="Kyrpides N."/>
            <person name="Lykidis A."/>
            <person name="LiPuma J.J."/>
            <person name="Konstantinidis K."/>
            <person name="Tiedje J.M."/>
            <person name="Richardson P."/>
        </authorList>
    </citation>
    <scope>NUCLEOTIDE SEQUENCE [LARGE SCALE GENOMIC DNA]</scope>
    <source>
        <strain>AU 1054</strain>
    </source>
</reference>
<organism>
    <name type="scientific">Burkholderia orbicola (strain AU 1054)</name>
    <dbReference type="NCBI Taxonomy" id="331271"/>
    <lineage>
        <taxon>Bacteria</taxon>
        <taxon>Pseudomonadati</taxon>
        <taxon>Pseudomonadota</taxon>
        <taxon>Betaproteobacteria</taxon>
        <taxon>Burkholderiales</taxon>
        <taxon>Burkholderiaceae</taxon>
        <taxon>Burkholderia</taxon>
        <taxon>Burkholderia cepacia complex</taxon>
        <taxon>Burkholderia orbicola</taxon>
    </lineage>
</organism>
<evidence type="ECO:0000255" key="1">
    <source>
        <dbReference type="HAMAP-Rule" id="MF_00086"/>
    </source>
</evidence>
<gene>
    <name evidence="1" type="primary">metK</name>
    <name type="ordered locus">Bcen_2467</name>
</gene>
<keyword id="KW-0067">ATP-binding</keyword>
<keyword id="KW-0963">Cytoplasm</keyword>
<keyword id="KW-0460">Magnesium</keyword>
<keyword id="KW-0479">Metal-binding</keyword>
<keyword id="KW-0547">Nucleotide-binding</keyword>
<keyword id="KW-0554">One-carbon metabolism</keyword>
<keyword id="KW-0630">Potassium</keyword>
<keyword id="KW-0808">Transferase</keyword>
<comment type="function">
    <text evidence="1">Catalyzes the formation of S-adenosylmethionine (AdoMet) from methionine and ATP. The overall synthetic reaction is composed of two sequential steps, AdoMet formation and the subsequent tripolyphosphate hydrolysis which occurs prior to release of AdoMet from the enzyme.</text>
</comment>
<comment type="catalytic activity">
    <reaction evidence="1">
        <text>L-methionine + ATP + H2O = S-adenosyl-L-methionine + phosphate + diphosphate</text>
        <dbReference type="Rhea" id="RHEA:21080"/>
        <dbReference type="ChEBI" id="CHEBI:15377"/>
        <dbReference type="ChEBI" id="CHEBI:30616"/>
        <dbReference type="ChEBI" id="CHEBI:33019"/>
        <dbReference type="ChEBI" id="CHEBI:43474"/>
        <dbReference type="ChEBI" id="CHEBI:57844"/>
        <dbReference type="ChEBI" id="CHEBI:59789"/>
        <dbReference type="EC" id="2.5.1.6"/>
    </reaction>
</comment>
<comment type="cofactor">
    <cofactor evidence="1">
        <name>Mg(2+)</name>
        <dbReference type="ChEBI" id="CHEBI:18420"/>
    </cofactor>
    <text evidence="1">Binds 2 divalent ions per subunit.</text>
</comment>
<comment type="cofactor">
    <cofactor evidence="1">
        <name>K(+)</name>
        <dbReference type="ChEBI" id="CHEBI:29103"/>
    </cofactor>
    <text evidence="1">Binds 1 potassium ion per subunit.</text>
</comment>
<comment type="pathway">
    <text evidence="1">Amino-acid biosynthesis; S-adenosyl-L-methionine biosynthesis; S-adenosyl-L-methionine from L-methionine: step 1/1.</text>
</comment>
<comment type="subunit">
    <text evidence="1">Homotetramer; dimer of dimers.</text>
</comment>
<comment type="subcellular location">
    <subcellularLocation>
        <location evidence="1">Cytoplasm</location>
    </subcellularLocation>
</comment>
<comment type="similarity">
    <text evidence="1">Belongs to the AdoMet synthase family.</text>
</comment>
<feature type="chain" id="PRO_0000302898" description="S-adenosylmethionine synthase">
    <location>
        <begin position="1"/>
        <end position="395"/>
    </location>
</feature>
<feature type="region of interest" description="Flexible loop" evidence="1">
    <location>
        <begin position="100"/>
        <end position="110"/>
    </location>
</feature>
<feature type="binding site" description="in other chain" evidence="1">
    <location>
        <position position="16"/>
    </location>
    <ligand>
        <name>ATP</name>
        <dbReference type="ChEBI" id="CHEBI:30616"/>
        <note>ligand shared between two neighboring subunits</note>
    </ligand>
</feature>
<feature type="binding site" evidence="1">
    <location>
        <position position="18"/>
    </location>
    <ligand>
        <name>Mg(2+)</name>
        <dbReference type="ChEBI" id="CHEBI:18420"/>
    </ligand>
</feature>
<feature type="binding site" evidence="1">
    <location>
        <position position="44"/>
    </location>
    <ligand>
        <name>K(+)</name>
        <dbReference type="ChEBI" id="CHEBI:29103"/>
    </ligand>
</feature>
<feature type="binding site" description="in other chain" evidence="1">
    <location>
        <position position="57"/>
    </location>
    <ligand>
        <name>L-methionine</name>
        <dbReference type="ChEBI" id="CHEBI:57844"/>
        <note>ligand shared between two neighboring subunits</note>
    </ligand>
</feature>
<feature type="binding site" description="in other chain" evidence="1">
    <location>
        <position position="100"/>
    </location>
    <ligand>
        <name>L-methionine</name>
        <dbReference type="ChEBI" id="CHEBI:57844"/>
        <note>ligand shared between two neighboring subunits</note>
    </ligand>
</feature>
<feature type="binding site" description="in other chain" evidence="1">
    <location>
        <begin position="167"/>
        <end position="169"/>
    </location>
    <ligand>
        <name>ATP</name>
        <dbReference type="ChEBI" id="CHEBI:30616"/>
        <note>ligand shared between two neighboring subunits</note>
    </ligand>
</feature>
<feature type="binding site" description="in other chain" evidence="1">
    <location>
        <begin position="233"/>
        <end position="234"/>
    </location>
    <ligand>
        <name>ATP</name>
        <dbReference type="ChEBI" id="CHEBI:30616"/>
        <note>ligand shared between two neighboring subunits</note>
    </ligand>
</feature>
<feature type="binding site" evidence="1">
    <location>
        <position position="242"/>
    </location>
    <ligand>
        <name>ATP</name>
        <dbReference type="ChEBI" id="CHEBI:30616"/>
        <note>ligand shared between two neighboring subunits</note>
    </ligand>
</feature>
<feature type="binding site" evidence="1">
    <location>
        <position position="242"/>
    </location>
    <ligand>
        <name>L-methionine</name>
        <dbReference type="ChEBI" id="CHEBI:57844"/>
        <note>ligand shared between two neighboring subunits</note>
    </ligand>
</feature>
<feature type="binding site" description="in other chain" evidence="1">
    <location>
        <begin position="248"/>
        <end position="249"/>
    </location>
    <ligand>
        <name>ATP</name>
        <dbReference type="ChEBI" id="CHEBI:30616"/>
        <note>ligand shared between two neighboring subunits</note>
    </ligand>
</feature>
<feature type="binding site" evidence="1">
    <location>
        <position position="265"/>
    </location>
    <ligand>
        <name>ATP</name>
        <dbReference type="ChEBI" id="CHEBI:30616"/>
        <note>ligand shared between two neighboring subunits</note>
    </ligand>
</feature>
<feature type="binding site" evidence="1">
    <location>
        <position position="269"/>
    </location>
    <ligand>
        <name>ATP</name>
        <dbReference type="ChEBI" id="CHEBI:30616"/>
        <note>ligand shared between two neighboring subunits</note>
    </ligand>
</feature>
<feature type="binding site" description="in other chain" evidence="1">
    <location>
        <position position="273"/>
    </location>
    <ligand>
        <name>L-methionine</name>
        <dbReference type="ChEBI" id="CHEBI:57844"/>
        <note>ligand shared between two neighboring subunits</note>
    </ligand>
</feature>
<accession>Q1BSN9</accession>